<protein>
    <recommendedName>
        <fullName evidence="1">Large ribosomal subunit protein uL15</fullName>
    </recommendedName>
    <alternativeName>
        <fullName evidence="3">50S ribosomal protein L15</fullName>
    </alternativeName>
</protein>
<reference key="1">
    <citation type="journal article" date="2003" name="Lancet">
        <title>Genome sequence of Vibrio parahaemolyticus: a pathogenic mechanism distinct from that of V. cholerae.</title>
        <authorList>
            <person name="Makino K."/>
            <person name="Oshima K."/>
            <person name="Kurokawa K."/>
            <person name="Yokoyama K."/>
            <person name="Uda T."/>
            <person name="Tagomori K."/>
            <person name="Iijima Y."/>
            <person name="Najima M."/>
            <person name="Nakano M."/>
            <person name="Yamashita A."/>
            <person name="Kubota Y."/>
            <person name="Kimura S."/>
            <person name="Yasunaga T."/>
            <person name="Honda T."/>
            <person name="Shinagawa H."/>
            <person name="Hattori M."/>
            <person name="Iida T."/>
        </authorList>
    </citation>
    <scope>NUCLEOTIDE SEQUENCE [LARGE SCALE GENOMIC DNA]</scope>
    <source>
        <strain>RIMD 2210633</strain>
    </source>
</reference>
<sequence>MRLNTLAPAAGSKHAPKRVGRGIGSGLGKTGGRGHKGQKSRSGGKVRPGFEGGQMPLKQRLPKFGFTSRKSLVSAEVRLAELAKVSGDVVDLNSLKAANIITKNIEFVKVVLSGEINKAVTVKGLRVTKGAKAAIEAAGGKIEE</sequence>
<keyword id="KW-0687">Ribonucleoprotein</keyword>
<keyword id="KW-0689">Ribosomal protein</keyword>
<keyword id="KW-0694">RNA-binding</keyword>
<keyword id="KW-0699">rRNA-binding</keyword>
<feature type="chain" id="PRO_0000104850" description="Large ribosomal subunit protein uL15">
    <location>
        <begin position="1"/>
        <end position="144"/>
    </location>
</feature>
<feature type="region of interest" description="Disordered" evidence="2">
    <location>
        <begin position="1"/>
        <end position="58"/>
    </location>
</feature>
<feature type="compositionally biased region" description="Gly residues" evidence="2">
    <location>
        <begin position="21"/>
        <end position="31"/>
    </location>
</feature>
<feature type="compositionally biased region" description="Basic residues" evidence="2">
    <location>
        <begin position="32"/>
        <end position="44"/>
    </location>
</feature>
<accession>Q87SZ4</accession>
<gene>
    <name evidence="1" type="primary">rplO</name>
    <name type="ordered locus">VP0276</name>
</gene>
<comment type="function">
    <text evidence="1">Binds to the 23S rRNA.</text>
</comment>
<comment type="subunit">
    <text evidence="1">Part of the 50S ribosomal subunit.</text>
</comment>
<comment type="similarity">
    <text evidence="1">Belongs to the universal ribosomal protein uL15 family.</text>
</comment>
<name>RL15_VIBPA</name>
<evidence type="ECO:0000255" key="1">
    <source>
        <dbReference type="HAMAP-Rule" id="MF_01341"/>
    </source>
</evidence>
<evidence type="ECO:0000256" key="2">
    <source>
        <dbReference type="SAM" id="MobiDB-lite"/>
    </source>
</evidence>
<evidence type="ECO:0000305" key="3"/>
<organism>
    <name type="scientific">Vibrio parahaemolyticus serotype O3:K6 (strain RIMD 2210633)</name>
    <dbReference type="NCBI Taxonomy" id="223926"/>
    <lineage>
        <taxon>Bacteria</taxon>
        <taxon>Pseudomonadati</taxon>
        <taxon>Pseudomonadota</taxon>
        <taxon>Gammaproteobacteria</taxon>
        <taxon>Vibrionales</taxon>
        <taxon>Vibrionaceae</taxon>
        <taxon>Vibrio</taxon>
    </lineage>
</organism>
<dbReference type="EMBL" id="BA000031">
    <property type="protein sequence ID" value="BAC58539.1"/>
    <property type="molecule type" value="Genomic_DNA"/>
</dbReference>
<dbReference type="RefSeq" id="NP_796655.1">
    <property type="nucleotide sequence ID" value="NC_004603.1"/>
</dbReference>
<dbReference type="RefSeq" id="WP_005450562.1">
    <property type="nucleotide sequence ID" value="NC_004603.1"/>
</dbReference>
<dbReference type="SMR" id="Q87SZ4"/>
<dbReference type="GeneID" id="83583104"/>
<dbReference type="KEGG" id="vpa:VP0276"/>
<dbReference type="PATRIC" id="fig|223926.6.peg.267"/>
<dbReference type="eggNOG" id="COG0200">
    <property type="taxonomic scope" value="Bacteria"/>
</dbReference>
<dbReference type="HOGENOM" id="CLU_055188_4_2_6"/>
<dbReference type="Proteomes" id="UP000002493">
    <property type="component" value="Chromosome 1"/>
</dbReference>
<dbReference type="GO" id="GO:0022625">
    <property type="term" value="C:cytosolic large ribosomal subunit"/>
    <property type="evidence" value="ECO:0007669"/>
    <property type="project" value="TreeGrafter"/>
</dbReference>
<dbReference type="GO" id="GO:0019843">
    <property type="term" value="F:rRNA binding"/>
    <property type="evidence" value="ECO:0007669"/>
    <property type="project" value="UniProtKB-UniRule"/>
</dbReference>
<dbReference type="GO" id="GO:0003735">
    <property type="term" value="F:structural constituent of ribosome"/>
    <property type="evidence" value="ECO:0007669"/>
    <property type="project" value="InterPro"/>
</dbReference>
<dbReference type="GO" id="GO:0006412">
    <property type="term" value="P:translation"/>
    <property type="evidence" value="ECO:0007669"/>
    <property type="project" value="UniProtKB-UniRule"/>
</dbReference>
<dbReference type="FunFam" id="3.100.10.10:FF:000003">
    <property type="entry name" value="50S ribosomal protein L15"/>
    <property type="match status" value="1"/>
</dbReference>
<dbReference type="Gene3D" id="3.100.10.10">
    <property type="match status" value="1"/>
</dbReference>
<dbReference type="HAMAP" id="MF_01341">
    <property type="entry name" value="Ribosomal_uL15"/>
    <property type="match status" value="1"/>
</dbReference>
<dbReference type="InterPro" id="IPR030878">
    <property type="entry name" value="Ribosomal_uL15"/>
</dbReference>
<dbReference type="InterPro" id="IPR021131">
    <property type="entry name" value="Ribosomal_uL15/eL18"/>
</dbReference>
<dbReference type="InterPro" id="IPR036227">
    <property type="entry name" value="Ribosomal_uL15/eL18_sf"/>
</dbReference>
<dbReference type="InterPro" id="IPR005749">
    <property type="entry name" value="Ribosomal_uL15_bac-type"/>
</dbReference>
<dbReference type="InterPro" id="IPR001196">
    <property type="entry name" value="Ribosomal_uL15_CS"/>
</dbReference>
<dbReference type="NCBIfam" id="TIGR01071">
    <property type="entry name" value="rplO_bact"/>
    <property type="match status" value="1"/>
</dbReference>
<dbReference type="PANTHER" id="PTHR12934">
    <property type="entry name" value="50S RIBOSOMAL PROTEIN L15"/>
    <property type="match status" value="1"/>
</dbReference>
<dbReference type="PANTHER" id="PTHR12934:SF11">
    <property type="entry name" value="LARGE RIBOSOMAL SUBUNIT PROTEIN UL15M"/>
    <property type="match status" value="1"/>
</dbReference>
<dbReference type="Pfam" id="PF00828">
    <property type="entry name" value="Ribosomal_L27A"/>
    <property type="match status" value="1"/>
</dbReference>
<dbReference type="SUPFAM" id="SSF52080">
    <property type="entry name" value="Ribosomal proteins L15p and L18e"/>
    <property type="match status" value="1"/>
</dbReference>
<dbReference type="PROSITE" id="PS00475">
    <property type="entry name" value="RIBOSOMAL_L15"/>
    <property type="match status" value="1"/>
</dbReference>
<proteinExistence type="inferred from homology"/>